<dbReference type="EMBL" id="CH408046">
    <property type="protein sequence ID" value="EDV10975.1"/>
    <property type="molecule type" value="Genomic_DNA"/>
</dbReference>
<dbReference type="SMR" id="B3LKH7"/>
<dbReference type="HOGENOM" id="CLU_711875_0_0_1"/>
<dbReference type="OrthoDB" id="14223at4893"/>
<dbReference type="Proteomes" id="UP000008335">
    <property type="component" value="Unassembled WGS sequence"/>
</dbReference>
<dbReference type="GO" id="GO:0005737">
    <property type="term" value="C:cytoplasm"/>
    <property type="evidence" value="ECO:0007669"/>
    <property type="project" value="UniProtKB-KW"/>
</dbReference>
<dbReference type="GO" id="GO:0005816">
    <property type="term" value="C:spindle pole body"/>
    <property type="evidence" value="ECO:0007669"/>
    <property type="project" value="UniProtKB-SubCell"/>
</dbReference>
<dbReference type="InterPro" id="IPR029330">
    <property type="entry name" value="Bbp1_C"/>
</dbReference>
<dbReference type="InterPro" id="IPR029328">
    <property type="entry name" value="Bbp1_N"/>
</dbReference>
<dbReference type="Pfam" id="PF15272">
    <property type="entry name" value="BBP1_C"/>
    <property type="match status" value="1"/>
</dbReference>
<dbReference type="Pfam" id="PF15271">
    <property type="entry name" value="BBP1_N"/>
    <property type="match status" value="1"/>
</dbReference>
<keyword id="KW-0175">Coiled coil</keyword>
<keyword id="KW-0963">Cytoplasm</keyword>
<keyword id="KW-0206">Cytoskeleton</keyword>
<keyword id="KW-0597">Phosphoprotein</keyword>
<gene>
    <name type="primary">BBP1</name>
    <name type="ORF">SCRG_02245</name>
</gene>
<sequence>MNQEDNTGGGGIFGLFKWTKDALFGTDISPSMKYKDQEERRDRSRYAQDDTNFSMKFGNDSNRRSTNLSRSNSWSGLDSTLHRKYELLPEYNENGFNSIVNGDHHSKERIRSLRSPAPIVPREPLRNEPTDTFGHRLHTKRRTINELSNSQIPFIPPQEDDPLLSKLFNKDGVNEVRRSPYKLSVKDIPGKFPSPLTKRDEIDNYYVRDEDACHKNREYKKAYFDLFAQMDLNSRDLEDLCEDVREQREQFHRNEQTYKQAYEEMRAELVNELKKSKTLFENYYSLGQKYKSLKKVLDQTISHEAELATSRERLYQEEDLKNFEIQTLKQRLSDLELKYTNLQIEKDMQRDNYESEIHDLLLQLSLRNNERKDTSAGSNIFSTGQYDRTPFHNGNNSYDSNSHSWDTDYLKNIDGFIER</sequence>
<comment type="function">
    <text evidence="1">Component of the spindle pole body (SPB) required for insertion of the nascent SPB into the nuclear envelope and for the proper execution of spindle pole body (SPB) duplication. Connects the central plaque of the SPB with the half-bridge. Required for proper localization of CDC5 at the SPB and for proper M-phase progression (By similarity).</text>
</comment>
<comment type="subunit">
    <text evidence="1">Homodimer. Interacts with KAR1, MPS2 and SPC29.</text>
</comment>
<comment type="subcellular location">
    <subcellularLocation>
        <location evidence="1">Cytoplasm</location>
        <location evidence="1">Cytoskeleton</location>
        <location evidence="1">Microtubule organizing center</location>
        <location evidence="1">Spindle pole body</location>
    </subcellularLocation>
    <text evidence="1">Associates with the periphary of the central plaque.</text>
</comment>
<comment type="similarity">
    <text evidence="5">Belongs to the BBP1 family.</text>
</comment>
<feature type="chain" id="PRO_0000409175" description="Spindle pole component BBP1">
    <location>
        <begin position="1"/>
        <end position="419"/>
    </location>
</feature>
<feature type="region of interest" description="Disordered" evidence="4">
    <location>
        <begin position="34"/>
        <end position="76"/>
    </location>
</feature>
<feature type="coiled-coil region" evidence="3">
    <location>
        <begin position="229"/>
        <end position="355"/>
    </location>
</feature>
<feature type="compositionally biased region" description="Basic and acidic residues" evidence="4">
    <location>
        <begin position="34"/>
        <end position="48"/>
    </location>
</feature>
<feature type="compositionally biased region" description="Low complexity" evidence="4">
    <location>
        <begin position="64"/>
        <end position="75"/>
    </location>
</feature>
<feature type="modified residue" description="Phosphoserine" evidence="2">
    <location>
        <position position="29"/>
    </location>
</feature>
<feature type="modified residue" description="Phosphoserine" evidence="2">
    <location>
        <position position="73"/>
    </location>
</feature>
<feature type="modified residue" description="Phosphoserine" evidence="2">
    <location>
        <position position="115"/>
    </location>
</feature>
<evidence type="ECO:0000250" key="1"/>
<evidence type="ECO:0000250" key="2">
    <source>
        <dbReference type="UniProtKB" id="Q12365"/>
    </source>
</evidence>
<evidence type="ECO:0000255" key="3"/>
<evidence type="ECO:0000256" key="4">
    <source>
        <dbReference type="SAM" id="MobiDB-lite"/>
    </source>
</evidence>
<evidence type="ECO:0000305" key="5"/>
<accession>B3LKH7</accession>
<proteinExistence type="inferred from homology"/>
<organism>
    <name type="scientific">Saccharomyces cerevisiae (strain RM11-1a)</name>
    <name type="common">Baker's yeast</name>
    <dbReference type="NCBI Taxonomy" id="285006"/>
    <lineage>
        <taxon>Eukaryota</taxon>
        <taxon>Fungi</taxon>
        <taxon>Dikarya</taxon>
        <taxon>Ascomycota</taxon>
        <taxon>Saccharomycotina</taxon>
        <taxon>Saccharomycetes</taxon>
        <taxon>Saccharomycetales</taxon>
        <taxon>Saccharomycetaceae</taxon>
        <taxon>Saccharomyces</taxon>
    </lineage>
</organism>
<protein>
    <recommendedName>
        <fullName>Spindle pole component BBP1</fullName>
    </recommendedName>
    <alternativeName>
        <fullName>BFR1-binding protein 1</fullName>
    </alternativeName>
</protein>
<name>BBP1_YEAS1</name>
<reference key="1">
    <citation type="submission" date="2005-03" db="EMBL/GenBank/DDBJ databases">
        <title>Annotation of the Saccharomyces cerevisiae RM11-1a genome.</title>
        <authorList>
            <consortium name="The Broad Institute Genome Sequencing Platform"/>
            <person name="Birren B.W."/>
            <person name="Lander E.S."/>
            <person name="Galagan J.E."/>
            <person name="Nusbaum C."/>
            <person name="Devon K."/>
            <person name="Cuomo C."/>
            <person name="Jaffe D.B."/>
            <person name="Butler J."/>
            <person name="Alvarez P."/>
            <person name="Gnerre S."/>
            <person name="Grabherr M."/>
            <person name="Kleber M."/>
            <person name="Mauceli E.W."/>
            <person name="Brockman W."/>
            <person name="MacCallum I.A."/>
            <person name="Rounsley S."/>
            <person name="Young S.K."/>
            <person name="LaButti K."/>
            <person name="Pushparaj V."/>
            <person name="DeCaprio D."/>
            <person name="Crawford M."/>
            <person name="Koehrsen M."/>
            <person name="Engels R."/>
            <person name="Montgomery P."/>
            <person name="Pearson M."/>
            <person name="Howarth C."/>
            <person name="Larson L."/>
            <person name="Luoma S."/>
            <person name="White J."/>
            <person name="O'Leary S."/>
            <person name="Kodira C.D."/>
            <person name="Zeng Q."/>
            <person name="Yandava C."/>
            <person name="Alvarado L."/>
            <person name="Pratt S."/>
            <person name="Kruglyak L."/>
        </authorList>
    </citation>
    <scope>NUCLEOTIDE SEQUENCE [LARGE SCALE GENOMIC DNA]</scope>
    <source>
        <strain>RM11-1a</strain>
    </source>
</reference>